<evidence type="ECO:0000255" key="1">
    <source>
        <dbReference type="HAMAP-Rule" id="MF_00518"/>
    </source>
</evidence>
<sequence length="145" mass="15925">MIALIQRVTRASVTVEDEVTGEIGPGLLVLLGVQKEDDEQKANRLCERVLGYRIFSDADGKMNLNVQQAGGSVLVVSQFTLAADTERGMRPSFSGGAAPDRAQALYEYFVERCRQQAINTQTGRFAADMQVELVNDGPVTFWLQV</sequence>
<accession>B5F000</accession>
<name>DTD_SALA4</name>
<keyword id="KW-0963">Cytoplasm</keyword>
<keyword id="KW-0378">Hydrolase</keyword>
<keyword id="KW-0694">RNA-binding</keyword>
<keyword id="KW-0820">tRNA-binding</keyword>
<proteinExistence type="inferred from homology"/>
<dbReference type="EC" id="3.1.1.96" evidence="1"/>
<dbReference type="EMBL" id="CP001138">
    <property type="protein sequence ID" value="ACH51356.1"/>
    <property type="molecule type" value="Genomic_DNA"/>
</dbReference>
<dbReference type="RefSeq" id="WP_000560973.1">
    <property type="nucleotide sequence ID" value="NC_011149.1"/>
</dbReference>
<dbReference type="SMR" id="B5F000"/>
<dbReference type="KEGG" id="sea:SeAg_B4261"/>
<dbReference type="HOGENOM" id="CLU_076901_1_0_6"/>
<dbReference type="Proteomes" id="UP000008819">
    <property type="component" value="Chromosome"/>
</dbReference>
<dbReference type="GO" id="GO:0005737">
    <property type="term" value="C:cytoplasm"/>
    <property type="evidence" value="ECO:0007669"/>
    <property type="project" value="UniProtKB-SubCell"/>
</dbReference>
<dbReference type="GO" id="GO:0051500">
    <property type="term" value="F:D-tyrosyl-tRNA(Tyr) deacylase activity"/>
    <property type="evidence" value="ECO:0007669"/>
    <property type="project" value="TreeGrafter"/>
</dbReference>
<dbReference type="GO" id="GO:0106026">
    <property type="term" value="F:Gly-tRNA(Ala) deacylase activity"/>
    <property type="evidence" value="ECO:0007669"/>
    <property type="project" value="UniProtKB-UniRule"/>
</dbReference>
<dbReference type="GO" id="GO:0043908">
    <property type="term" value="F:Ser(Gly)-tRNA(Ala) hydrolase activity"/>
    <property type="evidence" value="ECO:0007669"/>
    <property type="project" value="UniProtKB-UniRule"/>
</dbReference>
<dbReference type="GO" id="GO:0000049">
    <property type="term" value="F:tRNA binding"/>
    <property type="evidence" value="ECO:0007669"/>
    <property type="project" value="UniProtKB-UniRule"/>
</dbReference>
<dbReference type="GO" id="GO:0019478">
    <property type="term" value="P:D-amino acid catabolic process"/>
    <property type="evidence" value="ECO:0007669"/>
    <property type="project" value="UniProtKB-UniRule"/>
</dbReference>
<dbReference type="CDD" id="cd00563">
    <property type="entry name" value="Dtyr_deacylase"/>
    <property type="match status" value="1"/>
</dbReference>
<dbReference type="FunFam" id="3.50.80.10:FF:000001">
    <property type="entry name" value="D-aminoacyl-tRNA deacylase"/>
    <property type="match status" value="1"/>
</dbReference>
<dbReference type="Gene3D" id="3.50.80.10">
    <property type="entry name" value="D-tyrosyl-tRNA(Tyr) deacylase"/>
    <property type="match status" value="1"/>
</dbReference>
<dbReference type="HAMAP" id="MF_00518">
    <property type="entry name" value="Deacylase_Dtd"/>
    <property type="match status" value="1"/>
</dbReference>
<dbReference type="InterPro" id="IPR003732">
    <property type="entry name" value="Daa-tRNA_deacyls_DTD"/>
</dbReference>
<dbReference type="InterPro" id="IPR023509">
    <property type="entry name" value="DTD-like_sf"/>
</dbReference>
<dbReference type="NCBIfam" id="TIGR00256">
    <property type="entry name" value="D-aminoacyl-tRNA deacylase"/>
    <property type="match status" value="1"/>
</dbReference>
<dbReference type="PANTHER" id="PTHR10472:SF5">
    <property type="entry name" value="D-AMINOACYL-TRNA DEACYLASE 1"/>
    <property type="match status" value="1"/>
</dbReference>
<dbReference type="PANTHER" id="PTHR10472">
    <property type="entry name" value="D-TYROSYL-TRNA TYR DEACYLASE"/>
    <property type="match status" value="1"/>
</dbReference>
<dbReference type="Pfam" id="PF02580">
    <property type="entry name" value="Tyr_Deacylase"/>
    <property type="match status" value="1"/>
</dbReference>
<dbReference type="SUPFAM" id="SSF69500">
    <property type="entry name" value="DTD-like"/>
    <property type="match status" value="1"/>
</dbReference>
<feature type="chain" id="PRO_1000127565" description="D-aminoacyl-tRNA deacylase">
    <location>
        <begin position="1"/>
        <end position="145"/>
    </location>
</feature>
<feature type="short sequence motif" description="Gly-cisPro motif, important for rejection of L-amino acids" evidence="1">
    <location>
        <begin position="137"/>
        <end position="138"/>
    </location>
</feature>
<comment type="function">
    <text evidence="1">An aminoacyl-tRNA editing enzyme that deacylates mischarged D-aminoacyl-tRNAs. Also deacylates mischarged glycyl-tRNA(Ala), protecting cells against glycine mischarging by AlaRS. Acts via tRNA-based rather than protein-based catalysis; rejects L-amino acids rather than detecting D-amino acids in the active site. By recycling D-aminoacyl-tRNA to D-amino acids and free tRNA molecules, this enzyme counteracts the toxicity associated with the formation of D-aminoacyl-tRNA entities in vivo and helps enforce protein L-homochirality.</text>
</comment>
<comment type="catalytic activity">
    <reaction evidence="1">
        <text>glycyl-tRNA(Ala) + H2O = tRNA(Ala) + glycine + H(+)</text>
        <dbReference type="Rhea" id="RHEA:53744"/>
        <dbReference type="Rhea" id="RHEA-COMP:9657"/>
        <dbReference type="Rhea" id="RHEA-COMP:13640"/>
        <dbReference type="ChEBI" id="CHEBI:15377"/>
        <dbReference type="ChEBI" id="CHEBI:15378"/>
        <dbReference type="ChEBI" id="CHEBI:57305"/>
        <dbReference type="ChEBI" id="CHEBI:78442"/>
        <dbReference type="ChEBI" id="CHEBI:78522"/>
        <dbReference type="EC" id="3.1.1.96"/>
    </reaction>
</comment>
<comment type="catalytic activity">
    <reaction evidence="1">
        <text>a D-aminoacyl-tRNA + H2O = a tRNA + a D-alpha-amino acid + H(+)</text>
        <dbReference type="Rhea" id="RHEA:13953"/>
        <dbReference type="Rhea" id="RHEA-COMP:10123"/>
        <dbReference type="Rhea" id="RHEA-COMP:10124"/>
        <dbReference type="ChEBI" id="CHEBI:15377"/>
        <dbReference type="ChEBI" id="CHEBI:15378"/>
        <dbReference type="ChEBI" id="CHEBI:59871"/>
        <dbReference type="ChEBI" id="CHEBI:78442"/>
        <dbReference type="ChEBI" id="CHEBI:79333"/>
        <dbReference type="EC" id="3.1.1.96"/>
    </reaction>
</comment>
<comment type="subunit">
    <text evidence="1">Homodimer.</text>
</comment>
<comment type="subcellular location">
    <subcellularLocation>
        <location evidence="1">Cytoplasm</location>
    </subcellularLocation>
</comment>
<comment type="domain">
    <text evidence="1">A Gly-cisPro motif from one monomer fits into the active site of the other monomer to allow specific chiral rejection of L-amino acids.</text>
</comment>
<comment type="similarity">
    <text evidence="1">Belongs to the DTD family.</text>
</comment>
<reference key="1">
    <citation type="journal article" date="2011" name="J. Bacteriol.">
        <title>Comparative genomics of 28 Salmonella enterica isolates: evidence for CRISPR-mediated adaptive sublineage evolution.</title>
        <authorList>
            <person name="Fricke W.F."/>
            <person name="Mammel M.K."/>
            <person name="McDermott P.F."/>
            <person name="Tartera C."/>
            <person name="White D.G."/>
            <person name="Leclerc J.E."/>
            <person name="Ravel J."/>
            <person name="Cebula T.A."/>
        </authorList>
    </citation>
    <scope>NUCLEOTIDE SEQUENCE [LARGE SCALE GENOMIC DNA]</scope>
    <source>
        <strain>SL483</strain>
    </source>
</reference>
<protein>
    <recommendedName>
        <fullName evidence="1">D-aminoacyl-tRNA deacylase</fullName>
        <shortName evidence="1">DTD</shortName>
        <ecNumber evidence="1">3.1.1.96</ecNumber>
    </recommendedName>
    <alternativeName>
        <fullName evidence="1">Gly-tRNA(Ala) deacylase</fullName>
    </alternativeName>
</protein>
<gene>
    <name evidence="1" type="primary">dtd</name>
    <name type="ordered locus">SeAg_B4261</name>
</gene>
<organism>
    <name type="scientific">Salmonella agona (strain SL483)</name>
    <dbReference type="NCBI Taxonomy" id="454166"/>
    <lineage>
        <taxon>Bacteria</taxon>
        <taxon>Pseudomonadati</taxon>
        <taxon>Pseudomonadota</taxon>
        <taxon>Gammaproteobacteria</taxon>
        <taxon>Enterobacterales</taxon>
        <taxon>Enterobacteriaceae</taxon>
        <taxon>Salmonella</taxon>
    </lineage>
</organism>